<name>CUE4_SCHPO</name>
<feature type="transit peptide" description="Mitochondrion" evidence="1">
    <location>
        <begin position="1"/>
        <end position="29"/>
    </location>
</feature>
<feature type="chain" id="PRO_0000310344" description="CUE domain-containing protein 4, mitochondrial">
    <location>
        <begin position="30"/>
        <end position="215"/>
    </location>
</feature>
<feature type="domain" description="CUE" evidence="2">
    <location>
        <begin position="48"/>
        <end position="90"/>
    </location>
</feature>
<feature type="region of interest" description="Disordered" evidence="3">
    <location>
        <begin position="109"/>
        <end position="191"/>
    </location>
</feature>
<feature type="compositionally biased region" description="Low complexity" evidence="3">
    <location>
        <begin position="122"/>
        <end position="140"/>
    </location>
</feature>
<feature type="compositionally biased region" description="Low complexity" evidence="3">
    <location>
        <begin position="153"/>
        <end position="165"/>
    </location>
</feature>
<feature type="compositionally biased region" description="Basic and acidic residues" evidence="3">
    <location>
        <begin position="180"/>
        <end position="191"/>
    </location>
</feature>
<feature type="helix" evidence="5">
    <location>
        <begin position="181"/>
        <end position="212"/>
    </location>
</feature>
<gene>
    <name type="ORF">SPCC4G3.13c</name>
</gene>
<evidence type="ECO:0000255" key="1"/>
<evidence type="ECO:0000255" key="2">
    <source>
        <dbReference type="PROSITE-ProRule" id="PRU00468"/>
    </source>
</evidence>
<evidence type="ECO:0000256" key="3">
    <source>
        <dbReference type="SAM" id="MobiDB-lite"/>
    </source>
</evidence>
<evidence type="ECO:0000269" key="4">
    <source>
    </source>
</evidence>
<evidence type="ECO:0007829" key="5">
    <source>
        <dbReference type="PDB" id="6OP8"/>
    </source>
</evidence>
<accession>P87238</accession>
<proteinExistence type="evidence at protein level"/>
<organism>
    <name type="scientific">Schizosaccharomyces pombe (strain 972 / ATCC 24843)</name>
    <name type="common">Fission yeast</name>
    <dbReference type="NCBI Taxonomy" id="284812"/>
    <lineage>
        <taxon>Eukaryota</taxon>
        <taxon>Fungi</taxon>
        <taxon>Dikarya</taxon>
        <taxon>Ascomycota</taxon>
        <taxon>Taphrinomycotina</taxon>
        <taxon>Schizosaccharomycetes</taxon>
        <taxon>Schizosaccharomycetales</taxon>
        <taxon>Schizosaccharomycetaceae</taxon>
        <taxon>Schizosaccharomyces</taxon>
    </lineage>
</organism>
<sequence length="215" mass="23524">MQPEQLAGCAVVLTVTVLTLRWMFRVDKGGEVSESRTSSSGVDNEPPVNSEHVHLVKTVFPHLESSAIAYDLQKTKNVDATIENALRGQPLPLPPRNSSLYARFPLSAGAGASSHSEETTPSHEVTSNVSSGSSASSLASNEHRSLIETYNLSSRISSSDNSSSSTGNEEVRNRSKLPSSKKEREELFRKRKEEMILAARKRMEGKIKGEKQDKN</sequence>
<keyword id="KW-0002">3D-structure</keyword>
<keyword id="KW-0496">Mitochondrion</keyword>
<keyword id="KW-1185">Reference proteome</keyword>
<keyword id="KW-0809">Transit peptide</keyword>
<keyword id="KW-0833">Ubl conjugation pathway</keyword>
<dbReference type="EMBL" id="CU329672">
    <property type="protein sequence ID" value="CAB09768.1"/>
    <property type="molecule type" value="Genomic_DNA"/>
</dbReference>
<dbReference type="PIR" id="T41363">
    <property type="entry name" value="T41363"/>
</dbReference>
<dbReference type="PDB" id="6OP8">
    <property type="method" value="X-ray"/>
    <property type="resolution" value="1.70 A"/>
    <property type="chains" value="B=152-215"/>
</dbReference>
<dbReference type="PDBsum" id="6OP8"/>
<dbReference type="SMR" id="P87238"/>
<dbReference type="BioGRID" id="276103">
    <property type="interactions" value="4"/>
</dbReference>
<dbReference type="FunCoup" id="P87238">
    <property type="interactions" value="88"/>
</dbReference>
<dbReference type="STRING" id="284812.P87238"/>
<dbReference type="iPTMnet" id="P87238"/>
<dbReference type="PaxDb" id="4896-SPCC4G3.13c.1"/>
<dbReference type="EnsemblFungi" id="SPCC4G3.13c.1">
    <property type="protein sequence ID" value="SPCC4G3.13c.1:pep"/>
    <property type="gene ID" value="SPCC4G3.13c"/>
</dbReference>
<dbReference type="KEGG" id="spo:2539541"/>
<dbReference type="PomBase" id="SPCC4G3.13c"/>
<dbReference type="VEuPathDB" id="FungiDB:SPCC4G3.13c"/>
<dbReference type="eggNOG" id="ENOG502S6YF">
    <property type="taxonomic scope" value="Eukaryota"/>
</dbReference>
<dbReference type="HOGENOM" id="CLU_1475953_0_0_1"/>
<dbReference type="InParanoid" id="P87238"/>
<dbReference type="OMA" id="RRDIMWD"/>
<dbReference type="PRO" id="PR:P87238"/>
<dbReference type="Proteomes" id="UP000002485">
    <property type="component" value="Chromosome III"/>
</dbReference>
<dbReference type="GO" id="GO:0000836">
    <property type="term" value="C:Hrd1p ubiquitin ligase complex"/>
    <property type="evidence" value="ECO:0000266"/>
    <property type="project" value="PomBase"/>
</dbReference>
<dbReference type="GO" id="GO:0005739">
    <property type="term" value="C:mitochondrion"/>
    <property type="evidence" value="ECO:0007669"/>
    <property type="project" value="UniProtKB-SubCell"/>
</dbReference>
<dbReference type="GO" id="GO:0043130">
    <property type="term" value="F:ubiquitin binding"/>
    <property type="evidence" value="ECO:0007669"/>
    <property type="project" value="InterPro"/>
</dbReference>
<dbReference type="GO" id="GO:0097027">
    <property type="term" value="F:ubiquitin-protein transferase activator activity"/>
    <property type="evidence" value="ECO:0000314"/>
    <property type="project" value="PomBase"/>
</dbReference>
<dbReference type="GO" id="GO:0036503">
    <property type="term" value="P:ERAD pathway"/>
    <property type="evidence" value="ECO:0000266"/>
    <property type="project" value="PomBase"/>
</dbReference>
<dbReference type="CDD" id="cd14376">
    <property type="entry name" value="CUE_AUP1_AMFR_like"/>
    <property type="match status" value="1"/>
</dbReference>
<dbReference type="Gene3D" id="1.10.8.10">
    <property type="entry name" value="DNA helicase RuvA subunit, C-terminal domain"/>
    <property type="match status" value="1"/>
</dbReference>
<dbReference type="InterPro" id="IPR003892">
    <property type="entry name" value="CUE"/>
</dbReference>
<dbReference type="Pfam" id="PF02845">
    <property type="entry name" value="CUE"/>
    <property type="match status" value="1"/>
</dbReference>
<dbReference type="SMART" id="SM00546">
    <property type="entry name" value="CUE"/>
    <property type="match status" value="1"/>
</dbReference>
<dbReference type="PROSITE" id="PS51140">
    <property type="entry name" value="CUE"/>
    <property type="match status" value="1"/>
</dbReference>
<reference key="1">
    <citation type="journal article" date="2002" name="Nature">
        <title>The genome sequence of Schizosaccharomyces pombe.</title>
        <authorList>
            <person name="Wood V."/>
            <person name="Gwilliam R."/>
            <person name="Rajandream M.A."/>
            <person name="Lyne M.H."/>
            <person name="Lyne R."/>
            <person name="Stewart A."/>
            <person name="Sgouros J.G."/>
            <person name="Peat N."/>
            <person name="Hayles J."/>
            <person name="Baker S.G."/>
            <person name="Basham D."/>
            <person name="Bowman S."/>
            <person name="Brooks K."/>
            <person name="Brown D."/>
            <person name="Brown S."/>
            <person name="Chillingworth T."/>
            <person name="Churcher C.M."/>
            <person name="Collins M."/>
            <person name="Connor R."/>
            <person name="Cronin A."/>
            <person name="Davis P."/>
            <person name="Feltwell T."/>
            <person name="Fraser A."/>
            <person name="Gentles S."/>
            <person name="Goble A."/>
            <person name="Hamlin N."/>
            <person name="Harris D.E."/>
            <person name="Hidalgo J."/>
            <person name="Hodgson G."/>
            <person name="Holroyd S."/>
            <person name="Hornsby T."/>
            <person name="Howarth S."/>
            <person name="Huckle E.J."/>
            <person name="Hunt S."/>
            <person name="Jagels K."/>
            <person name="James K.D."/>
            <person name="Jones L."/>
            <person name="Jones M."/>
            <person name="Leather S."/>
            <person name="McDonald S."/>
            <person name="McLean J."/>
            <person name="Mooney P."/>
            <person name="Moule S."/>
            <person name="Mungall K.L."/>
            <person name="Murphy L.D."/>
            <person name="Niblett D."/>
            <person name="Odell C."/>
            <person name="Oliver K."/>
            <person name="O'Neil S."/>
            <person name="Pearson D."/>
            <person name="Quail M.A."/>
            <person name="Rabbinowitsch E."/>
            <person name="Rutherford K.M."/>
            <person name="Rutter S."/>
            <person name="Saunders D."/>
            <person name="Seeger K."/>
            <person name="Sharp S."/>
            <person name="Skelton J."/>
            <person name="Simmonds M.N."/>
            <person name="Squares R."/>
            <person name="Squares S."/>
            <person name="Stevens K."/>
            <person name="Taylor K."/>
            <person name="Taylor R.G."/>
            <person name="Tivey A."/>
            <person name="Walsh S.V."/>
            <person name="Warren T."/>
            <person name="Whitehead S."/>
            <person name="Woodward J.R."/>
            <person name="Volckaert G."/>
            <person name="Aert R."/>
            <person name="Robben J."/>
            <person name="Grymonprez B."/>
            <person name="Weltjens I."/>
            <person name="Vanstreels E."/>
            <person name="Rieger M."/>
            <person name="Schaefer M."/>
            <person name="Mueller-Auer S."/>
            <person name="Gabel C."/>
            <person name="Fuchs M."/>
            <person name="Duesterhoeft A."/>
            <person name="Fritzc C."/>
            <person name="Holzer E."/>
            <person name="Moestl D."/>
            <person name="Hilbert H."/>
            <person name="Borzym K."/>
            <person name="Langer I."/>
            <person name="Beck A."/>
            <person name="Lehrach H."/>
            <person name="Reinhardt R."/>
            <person name="Pohl T.M."/>
            <person name="Eger P."/>
            <person name="Zimmermann W."/>
            <person name="Wedler H."/>
            <person name="Wambutt R."/>
            <person name="Purnelle B."/>
            <person name="Goffeau A."/>
            <person name="Cadieu E."/>
            <person name="Dreano S."/>
            <person name="Gloux S."/>
            <person name="Lelaure V."/>
            <person name="Mottier S."/>
            <person name="Galibert F."/>
            <person name="Aves S.J."/>
            <person name="Xiang Z."/>
            <person name="Hunt C."/>
            <person name="Moore K."/>
            <person name="Hurst S.M."/>
            <person name="Lucas M."/>
            <person name="Rochet M."/>
            <person name="Gaillardin C."/>
            <person name="Tallada V.A."/>
            <person name="Garzon A."/>
            <person name="Thode G."/>
            <person name="Daga R.R."/>
            <person name="Cruzado L."/>
            <person name="Jimenez J."/>
            <person name="Sanchez M."/>
            <person name="del Rey F."/>
            <person name="Benito J."/>
            <person name="Dominguez A."/>
            <person name="Revuelta J.L."/>
            <person name="Moreno S."/>
            <person name="Armstrong J."/>
            <person name="Forsburg S.L."/>
            <person name="Cerutti L."/>
            <person name="Lowe T."/>
            <person name="McCombie W.R."/>
            <person name="Paulsen I."/>
            <person name="Potashkin J."/>
            <person name="Shpakovski G.V."/>
            <person name="Ussery D."/>
            <person name="Barrell B.G."/>
            <person name="Nurse P."/>
        </authorList>
    </citation>
    <scope>NUCLEOTIDE SEQUENCE [LARGE SCALE GENOMIC DNA]</scope>
    <source>
        <strain>972 / ATCC 24843</strain>
    </source>
</reference>
<reference key="2">
    <citation type="journal article" date="2006" name="Nat. Biotechnol.">
        <title>ORFeome cloning and global analysis of protein localization in the fission yeast Schizosaccharomyces pombe.</title>
        <authorList>
            <person name="Matsuyama A."/>
            <person name="Arai R."/>
            <person name="Yashiroda Y."/>
            <person name="Shirai A."/>
            <person name="Kamata A."/>
            <person name="Sekido S."/>
            <person name="Kobayashi Y."/>
            <person name="Hashimoto A."/>
            <person name="Hamamoto M."/>
            <person name="Hiraoka Y."/>
            <person name="Horinouchi S."/>
            <person name="Yoshida M."/>
        </authorList>
    </citation>
    <scope>SUBCELLULAR LOCATION [LARGE SCALE ANALYSIS]</scope>
</reference>
<protein>
    <recommendedName>
        <fullName>CUE domain-containing protein 4, mitochondrial</fullName>
    </recommendedName>
</protein>
<comment type="subcellular location">
    <subcellularLocation>
        <location evidence="4">Mitochondrion</location>
    </subcellularLocation>
</comment>